<proteinExistence type="inferred from homology"/>
<sequence length="384" mass="43297">MKLGRFLENGREQIRNLLLNASTVSSAPSFSFVSGNESADLDSCASSIVYAYCLQRKQLGRIVVPFFNIPRKELRLRPELSYLLNLASISSDDIVFLDDIVKLPKRIFSNPIYLVDHNSLDRKDLENFNGSIAGIIDHHKDEGGSLHADPRIIEECGSCCTLVCRYFMPVIRSLYDSKVSELHQTATNLAVLALGPILIDTGNLKNEKTTDTDVKIVNDLCSFVPKDWVRDEFFDTLKEKKKSCKGFSFDDLLRRDLKQYFPDGIVVNYASVGKGLDWIKKKRLGWEDELKSFAEVQNSDLVIVGLSLSKNDEFGRQLILYKRTERGAGLADSFLKLSKQNLGLEIIEEKDNGDLSMWNQRNSAASRKKVVPLLMDSVKQVASK</sequence>
<protein>
    <recommendedName>
        <fullName>Putative exopolyphosphatase</fullName>
        <shortName>ExopolyPase</shortName>
        <ecNumber>3.6.1.11</ecNumber>
    </recommendedName>
    <alternativeName>
        <fullName>Metaphosphatase</fullName>
    </alternativeName>
</protein>
<name>PPX1_SCHPO</name>
<keyword id="KW-0378">Hydrolase</keyword>
<keyword id="KW-0464">Manganese</keyword>
<keyword id="KW-0479">Metal-binding</keyword>
<keyword id="KW-1185">Reference proteome</keyword>
<dbReference type="EC" id="3.6.1.11"/>
<dbReference type="EMBL" id="CU329670">
    <property type="protein sequence ID" value="CAB16267.1"/>
    <property type="molecule type" value="Genomic_DNA"/>
</dbReference>
<dbReference type="PIR" id="T38544">
    <property type="entry name" value="T38544"/>
</dbReference>
<dbReference type="SMR" id="O14094"/>
<dbReference type="BioGRID" id="278344">
    <property type="interactions" value="44"/>
</dbReference>
<dbReference type="FunCoup" id="O14094">
    <property type="interactions" value="338"/>
</dbReference>
<dbReference type="STRING" id="284812.O14094"/>
<dbReference type="iPTMnet" id="O14094"/>
<dbReference type="PaxDb" id="4896-SPAC2F3.11.1"/>
<dbReference type="EnsemblFungi" id="SPAC2F3.11.1">
    <property type="protein sequence ID" value="SPAC2F3.11.1:pep"/>
    <property type="gene ID" value="SPAC2F3.11"/>
</dbReference>
<dbReference type="KEGG" id="spo:2541853"/>
<dbReference type="PomBase" id="SPAC2F3.11"/>
<dbReference type="VEuPathDB" id="FungiDB:SPAC2F3.11"/>
<dbReference type="eggNOG" id="KOG4129">
    <property type="taxonomic scope" value="Eukaryota"/>
</dbReference>
<dbReference type="HOGENOM" id="CLU_019358_1_0_1"/>
<dbReference type="InParanoid" id="O14094"/>
<dbReference type="OMA" id="TMTIFFN"/>
<dbReference type="PhylomeDB" id="O14094"/>
<dbReference type="PRO" id="PR:O14094"/>
<dbReference type="Proteomes" id="UP000002485">
    <property type="component" value="Chromosome I"/>
</dbReference>
<dbReference type="GO" id="GO:0005737">
    <property type="term" value="C:cytoplasm"/>
    <property type="evidence" value="ECO:0000318"/>
    <property type="project" value="GO_Central"/>
</dbReference>
<dbReference type="GO" id="GO:0005829">
    <property type="term" value="C:cytosol"/>
    <property type="evidence" value="ECO:0007005"/>
    <property type="project" value="PomBase"/>
</dbReference>
<dbReference type="GO" id="GO:0005759">
    <property type="term" value="C:mitochondrial matrix"/>
    <property type="evidence" value="ECO:0000266"/>
    <property type="project" value="PomBase"/>
</dbReference>
<dbReference type="GO" id="GO:0005634">
    <property type="term" value="C:nucleus"/>
    <property type="evidence" value="ECO:0007005"/>
    <property type="project" value="PomBase"/>
</dbReference>
<dbReference type="GO" id="GO:0004309">
    <property type="term" value="F:exopolyphosphatase activity"/>
    <property type="evidence" value="ECO:0000318"/>
    <property type="project" value="GO_Central"/>
</dbReference>
<dbReference type="GO" id="GO:0046872">
    <property type="term" value="F:metal ion binding"/>
    <property type="evidence" value="ECO:0007669"/>
    <property type="project" value="UniProtKB-KW"/>
</dbReference>
<dbReference type="GO" id="GO:0006112">
    <property type="term" value="P:energy reserve metabolic process"/>
    <property type="evidence" value="ECO:0000305"/>
    <property type="project" value="PomBase"/>
</dbReference>
<dbReference type="GO" id="GO:0006798">
    <property type="term" value="P:polyphosphate catabolic process"/>
    <property type="evidence" value="ECO:0000266"/>
    <property type="project" value="PomBase"/>
</dbReference>
<dbReference type="Gene3D" id="3.10.310.20">
    <property type="entry name" value="DHHA2 domain"/>
    <property type="match status" value="1"/>
</dbReference>
<dbReference type="Gene3D" id="3.90.1640.10">
    <property type="entry name" value="inorganic pyrophosphatase (n-terminal core)"/>
    <property type="match status" value="1"/>
</dbReference>
<dbReference type="InterPro" id="IPR001667">
    <property type="entry name" value="DDH_dom"/>
</dbReference>
<dbReference type="InterPro" id="IPR038763">
    <property type="entry name" value="DHH_sf"/>
</dbReference>
<dbReference type="InterPro" id="IPR004097">
    <property type="entry name" value="DHHA2"/>
</dbReference>
<dbReference type="InterPro" id="IPR038222">
    <property type="entry name" value="DHHA2_dom_sf"/>
</dbReference>
<dbReference type="PANTHER" id="PTHR12112">
    <property type="entry name" value="BNIP - RELATED"/>
    <property type="match status" value="1"/>
</dbReference>
<dbReference type="PANTHER" id="PTHR12112:SF39">
    <property type="entry name" value="EG:152A3.5 PROTEIN (FBGN0003116_PN PROTEIN)"/>
    <property type="match status" value="1"/>
</dbReference>
<dbReference type="Pfam" id="PF01368">
    <property type="entry name" value="DHH"/>
    <property type="match status" value="1"/>
</dbReference>
<dbReference type="Pfam" id="PF02833">
    <property type="entry name" value="DHHA2"/>
    <property type="match status" value="1"/>
</dbReference>
<dbReference type="SMART" id="SM01131">
    <property type="entry name" value="DHHA2"/>
    <property type="match status" value="1"/>
</dbReference>
<dbReference type="SUPFAM" id="SSF64182">
    <property type="entry name" value="DHH phosphoesterases"/>
    <property type="match status" value="1"/>
</dbReference>
<gene>
    <name type="ORF">SPAC2F3.11</name>
</gene>
<organism>
    <name type="scientific">Schizosaccharomyces pombe (strain 972 / ATCC 24843)</name>
    <name type="common">Fission yeast</name>
    <dbReference type="NCBI Taxonomy" id="284812"/>
    <lineage>
        <taxon>Eukaryota</taxon>
        <taxon>Fungi</taxon>
        <taxon>Dikarya</taxon>
        <taxon>Ascomycota</taxon>
        <taxon>Taphrinomycotina</taxon>
        <taxon>Schizosaccharomycetes</taxon>
        <taxon>Schizosaccharomycetales</taxon>
        <taxon>Schizosaccharomycetaceae</taxon>
        <taxon>Schizosaccharomyces</taxon>
    </lineage>
</organism>
<evidence type="ECO:0000250" key="1"/>
<evidence type="ECO:0000305" key="2"/>
<reference key="1">
    <citation type="journal article" date="2002" name="Nature">
        <title>The genome sequence of Schizosaccharomyces pombe.</title>
        <authorList>
            <person name="Wood V."/>
            <person name="Gwilliam R."/>
            <person name="Rajandream M.A."/>
            <person name="Lyne M.H."/>
            <person name="Lyne R."/>
            <person name="Stewart A."/>
            <person name="Sgouros J.G."/>
            <person name="Peat N."/>
            <person name="Hayles J."/>
            <person name="Baker S.G."/>
            <person name="Basham D."/>
            <person name="Bowman S."/>
            <person name="Brooks K."/>
            <person name="Brown D."/>
            <person name="Brown S."/>
            <person name="Chillingworth T."/>
            <person name="Churcher C.M."/>
            <person name="Collins M."/>
            <person name="Connor R."/>
            <person name="Cronin A."/>
            <person name="Davis P."/>
            <person name="Feltwell T."/>
            <person name="Fraser A."/>
            <person name="Gentles S."/>
            <person name="Goble A."/>
            <person name="Hamlin N."/>
            <person name="Harris D.E."/>
            <person name="Hidalgo J."/>
            <person name="Hodgson G."/>
            <person name="Holroyd S."/>
            <person name="Hornsby T."/>
            <person name="Howarth S."/>
            <person name="Huckle E.J."/>
            <person name="Hunt S."/>
            <person name="Jagels K."/>
            <person name="James K.D."/>
            <person name="Jones L."/>
            <person name="Jones M."/>
            <person name="Leather S."/>
            <person name="McDonald S."/>
            <person name="McLean J."/>
            <person name="Mooney P."/>
            <person name="Moule S."/>
            <person name="Mungall K.L."/>
            <person name="Murphy L.D."/>
            <person name="Niblett D."/>
            <person name="Odell C."/>
            <person name="Oliver K."/>
            <person name="O'Neil S."/>
            <person name="Pearson D."/>
            <person name="Quail M.A."/>
            <person name="Rabbinowitsch E."/>
            <person name="Rutherford K.M."/>
            <person name="Rutter S."/>
            <person name="Saunders D."/>
            <person name="Seeger K."/>
            <person name="Sharp S."/>
            <person name="Skelton J."/>
            <person name="Simmonds M.N."/>
            <person name="Squares R."/>
            <person name="Squares S."/>
            <person name="Stevens K."/>
            <person name="Taylor K."/>
            <person name="Taylor R.G."/>
            <person name="Tivey A."/>
            <person name="Walsh S.V."/>
            <person name="Warren T."/>
            <person name="Whitehead S."/>
            <person name="Woodward J.R."/>
            <person name="Volckaert G."/>
            <person name="Aert R."/>
            <person name="Robben J."/>
            <person name="Grymonprez B."/>
            <person name="Weltjens I."/>
            <person name="Vanstreels E."/>
            <person name="Rieger M."/>
            <person name="Schaefer M."/>
            <person name="Mueller-Auer S."/>
            <person name="Gabel C."/>
            <person name="Fuchs M."/>
            <person name="Duesterhoeft A."/>
            <person name="Fritzc C."/>
            <person name="Holzer E."/>
            <person name="Moestl D."/>
            <person name="Hilbert H."/>
            <person name="Borzym K."/>
            <person name="Langer I."/>
            <person name="Beck A."/>
            <person name="Lehrach H."/>
            <person name="Reinhardt R."/>
            <person name="Pohl T.M."/>
            <person name="Eger P."/>
            <person name="Zimmermann W."/>
            <person name="Wedler H."/>
            <person name="Wambutt R."/>
            <person name="Purnelle B."/>
            <person name="Goffeau A."/>
            <person name="Cadieu E."/>
            <person name="Dreano S."/>
            <person name="Gloux S."/>
            <person name="Lelaure V."/>
            <person name="Mottier S."/>
            <person name="Galibert F."/>
            <person name="Aves S.J."/>
            <person name="Xiang Z."/>
            <person name="Hunt C."/>
            <person name="Moore K."/>
            <person name="Hurst S.M."/>
            <person name="Lucas M."/>
            <person name="Rochet M."/>
            <person name="Gaillardin C."/>
            <person name="Tallada V.A."/>
            <person name="Garzon A."/>
            <person name="Thode G."/>
            <person name="Daga R.R."/>
            <person name="Cruzado L."/>
            <person name="Jimenez J."/>
            <person name="Sanchez M."/>
            <person name="del Rey F."/>
            <person name="Benito J."/>
            <person name="Dominguez A."/>
            <person name="Revuelta J.L."/>
            <person name="Moreno S."/>
            <person name="Armstrong J."/>
            <person name="Forsburg S.L."/>
            <person name="Cerutti L."/>
            <person name="Lowe T."/>
            <person name="McCombie W.R."/>
            <person name="Paulsen I."/>
            <person name="Potashkin J."/>
            <person name="Shpakovski G.V."/>
            <person name="Ussery D."/>
            <person name="Barrell B.G."/>
            <person name="Nurse P."/>
        </authorList>
    </citation>
    <scope>NUCLEOTIDE SEQUENCE [LARGE SCALE GENOMIC DNA]</scope>
    <source>
        <strain>972 / ATCC 24843</strain>
    </source>
</reference>
<accession>O14094</accession>
<feature type="chain" id="PRO_0000158600" description="Putative exopolyphosphatase">
    <location>
        <begin position="1"/>
        <end position="384"/>
    </location>
</feature>
<feature type="binding site" evidence="1">
    <location>
        <position position="40"/>
    </location>
    <ligand>
        <name>Mn(2+)</name>
        <dbReference type="ChEBI" id="CHEBI:29035"/>
        <label>1</label>
    </ligand>
</feature>
<feature type="binding site" evidence="1">
    <location>
        <position position="42"/>
    </location>
    <ligand>
        <name>Mn(2+)</name>
        <dbReference type="ChEBI" id="CHEBI:29035"/>
        <label>2</label>
    </ligand>
</feature>
<feature type="binding site" evidence="1">
    <location>
        <position position="116"/>
    </location>
    <ligand>
        <name>Mn(2+)</name>
        <dbReference type="ChEBI" id="CHEBI:29035"/>
        <label>1</label>
    </ligand>
</feature>
<feature type="binding site" evidence="1">
    <location>
        <position position="116"/>
    </location>
    <ligand>
        <name>Mn(2+)</name>
        <dbReference type="ChEBI" id="CHEBI:29035"/>
        <label>2</label>
    </ligand>
</feature>
<feature type="binding site" evidence="1">
    <location>
        <position position="138"/>
    </location>
    <ligand>
        <name>Mn(2+)</name>
        <dbReference type="ChEBI" id="CHEBI:29035"/>
        <label>2</label>
    </ligand>
</feature>
<feature type="binding site" evidence="1">
    <location>
        <position position="200"/>
    </location>
    <ligand>
        <name>Mn(2+)</name>
        <dbReference type="ChEBI" id="CHEBI:29035"/>
        <label>2</label>
    </ligand>
</feature>
<comment type="function">
    <text evidence="1">Degradation of inorganic polyphosphates.</text>
</comment>
<comment type="catalytic activity">
    <reaction>
        <text>[phosphate](n) + H2O = [phosphate](n-1) + phosphate + H(+)</text>
        <dbReference type="Rhea" id="RHEA:21528"/>
        <dbReference type="Rhea" id="RHEA-COMP:9859"/>
        <dbReference type="Rhea" id="RHEA-COMP:14279"/>
        <dbReference type="ChEBI" id="CHEBI:15377"/>
        <dbReference type="ChEBI" id="CHEBI:15378"/>
        <dbReference type="ChEBI" id="CHEBI:16838"/>
        <dbReference type="ChEBI" id="CHEBI:43474"/>
        <dbReference type="EC" id="3.6.1.11"/>
    </reaction>
</comment>
<comment type="cofactor">
    <cofactor evidence="2">
        <name>Mn(2+)</name>
        <dbReference type="ChEBI" id="CHEBI:29035"/>
    </cofactor>
    <text evidence="2">Binds 2 manganese ions per subunit.</text>
</comment>
<comment type="similarity">
    <text evidence="2">Belongs to the PPase class C family.</text>
</comment>